<proteinExistence type="evidence at protein level"/>
<name>PA2HL_VIPAA</name>
<comment type="function">
    <text evidence="1 3 4 5 6 8 9 10 11">Snake venom phospholipase A2 homolog that lacks enzymatic activity. Is very active in inducing myonecrosis in vivo and shows a potent calcium-independent membrane-damaging activity in vitro, most probably by binding and incorporating in the membrane. Also acts as a presynaptic neurotoxin. A model of myotoxic mechanism has been proposed: an apo Lys49-PLA2 is activated by the entrance of a hydrophobic molecule (e.g. fatty acid) at the hydrophobic channel of the protein leading to a reorientation of a monomer (By similarity). This reorientation causes a transition between 'inactive' to 'active' states, causing alignment of C-terminal and membrane-docking sites (MDoS) side-by-side and putting the membrane-disruption sites (MDiS) in the same plane, exposed to solvent and in a symmetric position for both monomers (By similarity). The MDoS region stabilizes the toxin on membrane by the interaction of charged residues with phospholipid head groups (By similarity). Subsequently, the MDiS region destabilizes the membrane with penetration of hydrophobic residues (By similarity). This insertion causes a disorganization of the membrane, allowing an uncontrolled influx of ions (i.e. calcium and sodium), and eventually triggering irreversible intracellular alterations and cell death (By similarity).</text>
</comment>
<comment type="subcellular location">
    <subcellularLocation>
        <location evidence="5 7">Secreted</location>
    </subcellularLocation>
</comment>
<comment type="tissue specificity">
    <text evidence="20 21">Expressed by the venom gland.</text>
</comment>
<comment type="toxic dose">
    <text evidence="6">Is not lethal to mice even at 10 mg/kg.</text>
</comment>
<comment type="similarity">
    <text evidence="19">Belongs to the phospholipase A2 family. Group II subfamily. S49 sub-subfamily.</text>
</comment>
<comment type="caution">
    <text evidence="19">Does not bind calcium as one of the calcium-binding sites is lost (Asp-&gt;Ser in position 64, which corresponds to 'Ser-49' in the current nomenclature).</text>
</comment>
<feature type="signal peptide" evidence="5">
    <location>
        <begin position="1"/>
        <end position="16"/>
    </location>
</feature>
<feature type="chain" id="PRO_0000022974" description="Basic phospholipase A2 homolog ammodytin L" evidence="5">
    <location>
        <begin position="17"/>
        <end position="138"/>
    </location>
</feature>
<feature type="region of interest" description="Important for membrane-damaging activities in eukaryotes and bacteria; heparin-binding" evidence="2">
    <location>
        <begin position="121"/>
        <end position="133"/>
    </location>
</feature>
<feature type="disulfide bond" evidence="12 22">
    <location>
        <begin position="42"/>
        <end position="131"/>
    </location>
</feature>
<feature type="disulfide bond" evidence="12 22">
    <location>
        <begin position="44"/>
        <end position="60"/>
    </location>
</feature>
<feature type="disulfide bond" evidence="12 22">
    <location>
        <begin position="59"/>
        <end position="111"/>
    </location>
</feature>
<feature type="disulfide bond" evidence="12 22">
    <location>
        <begin position="65"/>
        <end position="138"/>
    </location>
</feature>
<feature type="disulfide bond" evidence="12 22">
    <location>
        <begin position="66"/>
        <end position="104"/>
    </location>
</feature>
<feature type="disulfide bond" evidence="12 22">
    <location>
        <begin position="73"/>
        <end position="97"/>
    </location>
</feature>
<feature type="disulfide bond" evidence="12 22">
    <location>
        <begin position="91"/>
        <end position="102"/>
    </location>
</feature>
<feature type="sequence variant" description="In minor variant." evidence="7">
    <original>P</original>
    <variation>S</variation>
    <location>
        <position position="71"/>
    </location>
</feature>
<feature type="mutagenesis site" description="Enzymatically active in presence of calcium with increased toxicity; when associated with V-46 or W-46; G-48 and D-64." evidence="6">
    <original>H</original>
    <variation>Y</variation>
    <location>
        <position position="43"/>
    </location>
</feature>
<feature type="mutagenesis site" description="Enzymatically active in presence of calcium with increased toxicity; when associated with Y-43; G-48 and D-64." evidence="6">
    <original>L</original>
    <variation>V</variation>
    <variation>W</variation>
    <location>
        <position position="46"/>
    </location>
</feature>
<feature type="mutagenesis site" description="Enzymatically active in presence of calcium with increased toxicity; when associated with Y-43; V-46 or W-46; and D-64." evidence="6">
    <original>N</original>
    <variation>G</variation>
    <location>
        <position position="48"/>
    </location>
</feature>
<feature type="mutagenesis site" description="Enzymatically active in presence of calcium with increased toxicity; when associated with Y-43; V-46 or W-46; and G-48." evidence="6">
    <original>S</original>
    <variation>D</variation>
    <location>
        <position position="64"/>
    </location>
</feature>
<feature type="helix" evidence="23">
    <location>
        <begin position="18"/>
        <end position="29"/>
    </location>
</feature>
<feature type="helix" evidence="23">
    <location>
        <begin position="33"/>
        <end position="37"/>
    </location>
</feature>
<feature type="turn" evidence="23">
    <location>
        <begin position="41"/>
        <end position="43"/>
    </location>
</feature>
<feature type="helix" evidence="23">
    <location>
        <begin position="55"/>
        <end position="68"/>
    </location>
</feature>
<feature type="helix" evidence="23">
    <location>
        <begin position="71"/>
        <end position="73"/>
    </location>
</feature>
<feature type="turn" evidence="23">
    <location>
        <begin position="75"/>
        <end position="77"/>
    </location>
</feature>
<feature type="strand" evidence="23">
    <location>
        <begin position="82"/>
        <end position="85"/>
    </location>
</feature>
<feature type="strand" evidence="23">
    <location>
        <begin position="88"/>
        <end position="91"/>
    </location>
</feature>
<feature type="helix" evidence="23">
    <location>
        <begin position="96"/>
        <end position="114"/>
    </location>
</feature>
<feature type="helix" evidence="23">
    <location>
        <begin position="115"/>
        <end position="118"/>
    </location>
</feature>
<feature type="helix" evidence="23">
    <location>
        <begin position="121"/>
        <end position="123"/>
    </location>
</feature>
<feature type="helix" evidence="23">
    <location>
        <begin position="128"/>
        <end position="130"/>
    </location>
</feature>
<sequence>MRILWIVAVCLIGVEGSVIEFGKMIQEETDKNPLTSYSFYGCHCGLGNKGKPKDATDRCCFVHSCCYAKLPDCSPKTNRYEYHRENGAIVCGSSTPCKKQICECDRAAAICFRENLKTYNKKYKVYLRFKCKGVSEKC</sequence>
<organism>
    <name type="scientific">Vipera ammodytes ammodytes</name>
    <name type="common">Western sand viper</name>
    <dbReference type="NCBI Taxonomy" id="8705"/>
    <lineage>
        <taxon>Eukaryota</taxon>
        <taxon>Metazoa</taxon>
        <taxon>Chordata</taxon>
        <taxon>Craniata</taxon>
        <taxon>Vertebrata</taxon>
        <taxon>Euteleostomi</taxon>
        <taxon>Lepidosauria</taxon>
        <taxon>Squamata</taxon>
        <taxon>Bifurcata</taxon>
        <taxon>Unidentata</taxon>
        <taxon>Episquamata</taxon>
        <taxon>Toxicofera</taxon>
        <taxon>Serpentes</taxon>
        <taxon>Colubroidea</taxon>
        <taxon>Viperidae</taxon>
        <taxon>Viperinae</taxon>
        <taxon>Vipera</taxon>
    </lineage>
</organism>
<dbReference type="EMBL" id="X53036">
    <property type="protein sequence ID" value="CAA37208.1"/>
    <property type="molecule type" value="mRNA"/>
</dbReference>
<dbReference type="EMBL" id="X84017">
    <property type="protein sequence ID" value="CAA58839.1"/>
    <property type="molecule type" value="Genomic_DNA"/>
</dbReference>
<dbReference type="PIR" id="S10992">
    <property type="entry name" value="S10992"/>
</dbReference>
<dbReference type="PDB" id="3DIH">
    <property type="method" value="X-ray"/>
    <property type="resolution" value="2.60 A"/>
    <property type="chains" value="A=17-138"/>
</dbReference>
<dbReference type="PDBsum" id="3DIH"/>
<dbReference type="SMR" id="P17935"/>
<dbReference type="EvolutionaryTrace" id="P17935"/>
<dbReference type="GO" id="GO:0005576">
    <property type="term" value="C:extracellular region"/>
    <property type="evidence" value="ECO:0007669"/>
    <property type="project" value="UniProtKB-SubCell"/>
</dbReference>
<dbReference type="GO" id="GO:0005509">
    <property type="term" value="F:calcium ion binding"/>
    <property type="evidence" value="ECO:0007669"/>
    <property type="project" value="InterPro"/>
</dbReference>
<dbReference type="GO" id="GO:0047498">
    <property type="term" value="F:calcium-dependent phospholipase A2 activity"/>
    <property type="evidence" value="ECO:0007669"/>
    <property type="project" value="TreeGrafter"/>
</dbReference>
<dbReference type="GO" id="GO:0005543">
    <property type="term" value="F:phospholipid binding"/>
    <property type="evidence" value="ECO:0007669"/>
    <property type="project" value="TreeGrafter"/>
</dbReference>
<dbReference type="GO" id="GO:0090729">
    <property type="term" value="F:toxin activity"/>
    <property type="evidence" value="ECO:0007669"/>
    <property type="project" value="UniProtKB-KW"/>
</dbReference>
<dbReference type="GO" id="GO:0050482">
    <property type="term" value="P:arachidonate secretion"/>
    <property type="evidence" value="ECO:0007669"/>
    <property type="project" value="InterPro"/>
</dbReference>
<dbReference type="GO" id="GO:0016042">
    <property type="term" value="P:lipid catabolic process"/>
    <property type="evidence" value="ECO:0007669"/>
    <property type="project" value="InterPro"/>
</dbReference>
<dbReference type="GO" id="GO:0042130">
    <property type="term" value="P:negative regulation of T cell proliferation"/>
    <property type="evidence" value="ECO:0007669"/>
    <property type="project" value="TreeGrafter"/>
</dbReference>
<dbReference type="GO" id="GO:0006644">
    <property type="term" value="P:phospholipid metabolic process"/>
    <property type="evidence" value="ECO:0007669"/>
    <property type="project" value="InterPro"/>
</dbReference>
<dbReference type="CDD" id="cd00125">
    <property type="entry name" value="PLA2c"/>
    <property type="match status" value="1"/>
</dbReference>
<dbReference type="FunFam" id="1.20.90.10:FF:000001">
    <property type="entry name" value="Basic phospholipase A2 homolog"/>
    <property type="match status" value="1"/>
</dbReference>
<dbReference type="Gene3D" id="1.20.90.10">
    <property type="entry name" value="Phospholipase A2 domain"/>
    <property type="match status" value="1"/>
</dbReference>
<dbReference type="InterPro" id="IPR001211">
    <property type="entry name" value="PLipase_A2"/>
</dbReference>
<dbReference type="InterPro" id="IPR033112">
    <property type="entry name" value="PLipase_A2_Asp_AS"/>
</dbReference>
<dbReference type="InterPro" id="IPR016090">
    <property type="entry name" value="PLipase_A2_dom"/>
</dbReference>
<dbReference type="InterPro" id="IPR036444">
    <property type="entry name" value="PLipase_A2_dom_sf"/>
</dbReference>
<dbReference type="InterPro" id="IPR033113">
    <property type="entry name" value="PLipase_A2_His_AS"/>
</dbReference>
<dbReference type="PANTHER" id="PTHR11716">
    <property type="entry name" value="PHOSPHOLIPASE A2 FAMILY MEMBER"/>
    <property type="match status" value="1"/>
</dbReference>
<dbReference type="PANTHER" id="PTHR11716:SF9">
    <property type="entry name" value="PHOSPHOLIPASE A2, MEMBRANE ASSOCIATED"/>
    <property type="match status" value="1"/>
</dbReference>
<dbReference type="Pfam" id="PF00068">
    <property type="entry name" value="Phospholip_A2_1"/>
    <property type="match status" value="1"/>
</dbReference>
<dbReference type="PRINTS" id="PR00389">
    <property type="entry name" value="PHPHLIPASEA2"/>
</dbReference>
<dbReference type="SMART" id="SM00085">
    <property type="entry name" value="PA2c"/>
    <property type="match status" value="1"/>
</dbReference>
<dbReference type="SUPFAM" id="SSF48619">
    <property type="entry name" value="Phospholipase A2, PLA2"/>
    <property type="match status" value="1"/>
</dbReference>
<dbReference type="PROSITE" id="PS00119">
    <property type="entry name" value="PA2_ASP"/>
    <property type="match status" value="1"/>
</dbReference>
<dbReference type="PROSITE" id="PS00118">
    <property type="entry name" value="PA2_HIS"/>
    <property type="match status" value="1"/>
</dbReference>
<reference key="1">
    <citation type="journal article" date="1990" name="Nucleic Acids Res.">
        <title>Nucleotide sequence of a cDNA encoding ammodytin L.</title>
        <authorList>
            <person name="Pungercar J."/>
            <person name="Liang N.-S."/>
            <person name="Strukelj B."/>
            <person name="Gubensek F."/>
        </authorList>
    </citation>
    <scope>NUCLEOTIDE SEQUENCE [MRNA]</scope>
    <scope>PARTIAL PROTEIN SEQUENCE</scope>
    <scope>SUBCELLULAR LOCATION</scope>
    <scope>VARIANT SER-71</scope>
    <source>
        <strain>Northern Balkan</strain>
        <tissue>Venom gland</tissue>
    </source>
</reference>
<reference key="2">
    <citation type="journal article" date="1997" name="Eur. J. Biochem.">
        <title>Bov-B long interspersed repeated DNA (LINE) sequences are present in Vipera ammodytes phospholipase A2 genes and in genomes of Viperidae snakes.</title>
        <authorList>
            <person name="Kordis D."/>
            <person name="Gubensek F."/>
        </authorList>
    </citation>
    <scope>NUCLEOTIDE SEQUENCE [GENOMIC DNA]</scope>
</reference>
<reference key="3">
    <citation type="journal article" date="1991" name="Eur. J. Biochem.">
        <title>The primary structure of ammodytin L, a myotoxic phospholipase A2 homologue from Vipera ammodytes venom.</title>
        <authorList>
            <person name="Krizaj I."/>
            <person name="Bieber A.L."/>
            <person name="Ritonja A."/>
            <person name="Gubensek F."/>
        </authorList>
    </citation>
    <scope>PROTEIN SEQUENCE OF 17-138</scope>
    <scope>FUNCTION</scope>
    <scope>SUBCELLULAR LOCATION</scope>
    <source>
        <strain>Northern Balkan</strain>
        <tissue>Venom</tissue>
    </source>
</reference>
<reference key="4">
    <citation type="journal article" date="1995" name="Biochim. Biophys. Acta">
        <title>Effect of ammodytin L from Vipera ammodytes on L-6 cells from rat skeletal muscle.</title>
        <authorList>
            <person name="Incerpi S."/>
            <person name="de Vito P."/>
            <person name="Luly P."/>
            <person name="Rufini S."/>
        </authorList>
    </citation>
    <scope>FUNCTION</scope>
</reference>
<reference key="5">
    <citation type="journal article" date="1996" name="Toxicon">
        <title>Effect of ammodytin L from the venom of Vipera ammodytes on Xenopus laevis differentiated muscle fibres and regenerating limbs.</title>
        <authorList>
            <person name="Bernardini S."/>
            <person name="Cannata S."/>
            <person name="Filoni S."/>
            <person name="Luly P."/>
            <person name="Rufini S."/>
        </authorList>
    </citation>
    <scope>FUNCTION</scope>
</reference>
<reference key="6">
    <citation type="journal article" date="1996" name="Biochem. J.">
        <title>Proliferative effect of ammodytin L from the venom of Vipera ammodytes on 208F rat fibroblasts in culture.</title>
        <authorList>
            <person name="Rufini S."/>
            <person name="Cesaroni M.P."/>
            <person name="Balestro N."/>
            <person name="Luly P."/>
        </authorList>
    </citation>
    <scope>FUNCTION</scope>
</reference>
<reference key="7">
    <citation type="journal article" date="1998" name="Biochem. Biophys. Res. Commun.">
        <title>Ammodytin L, an inactive phospholipase A2 homologue with myotoxicity in mice, binds to the presynaptic acceptor of the beta-neurotoxic ammodytoxin C in Torpedo: an indication for a phospholipase A2 activity-independent mechanism of action of beta-neurotoxins in fish?</title>
        <authorList>
            <person name="Pungercar J."/>
            <person name="Vucemilo N."/>
            <person name="Faure G."/>
            <person name="Bon C."/>
            <person name="Verheij H.M."/>
            <person name="Gubensek F."/>
            <person name="Krizaj I."/>
        </authorList>
    </citation>
    <scope>FUNCTION</scope>
</reference>
<reference key="8">
    <citation type="journal article" date="2000" name="Pflugers Arch.">
        <title>The effect of ammodytin L on frog neuromuscular junction.</title>
        <authorList>
            <person name="Horvat-Znidarsic I."/>
            <person name="Suput D."/>
            <person name="Gubensek F."/>
        </authorList>
    </citation>
    <scope>FUNCTION</scope>
    <source>
        <tissue>Venom</tissue>
    </source>
</reference>
<reference key="9">
    <citation type="journal article" date="2000" name="Pflugers Arch.">
        <title>Effects of ammodytin L on miniature and endplate potentials in neuromuscular junction of frog m.cutaneus pectoris.</title>
        <authorList>
            <person name="Frangez R."/>
            <person name="Krizaj I."/>
            <person name="Gubensek F."/>
            <person name="Suput D."/>
        </authorList>
    </citation>
    <scope>FUNCTION</scope>
    <source>
        <tissue>Venom</tissue>
    </source>
</reference>
<reference key="10">
    <citation type="journal article" date="2007" name="Biochemistry">
        <title>Restoration of enzymatic activity in a Ser-49 phospholipase A2 homologue decreases its Ca(2+)-independent membrane-damaging activity and increases its toxicity.</title>
        <authorList>
            <person name="Petan T."/>
            <person name="Krizaj I."/>
            <person name="Pungercar J."/>
        </authorList>
    </citation>
    <scope>FUNCTION</scope>
    <scope>TOXIC DOSE</scope>
    <scope>MUTAGENESIS OF HIS-43; LEU-46; ASN-48 AND SER-64</scope>
    <source>
        <tissue>Venom</tissue>
    </source>
</reference>
<reference key="11">
    <citation type="submission" date="2008-06" db="PDB data bank">
        <title>Crystal structure of ammodytin L.</title>
        <authorList>
            <person name="Turk D."/>
            <person name="Guncar G."/>
            <person name="Krizaj I."/>
        </authorList>
    </citation>
    <scope>X-RAY CRYSTALLOGRAPHY (2.6 ANGSTROMS) OF 17-138</scope>
    <scope>DISULFIDE BOND</scope>
</reference>
<accession>P17935</accession>
<keyword id="KW-0002">3D-structure</keyword>
<keyword id="KW-0903">Direct protein sequencing</keyword>
<keyword id="KW-1015">Disulfide bond</keyword>
<keyword id="KW-0959">Myotoxin</keyword>
<keyword id="KW-0528">Neurotoxin</keyword>
<keyword id="KW-0638">Presynaptic neurotoxin</keyword>
<keyword id="KW-0964">Secreted</keyword>
<keyword id="KW-0732">Signal</keyword>
<keyword id="KW-0800">Toxin</keyword>
<evidence type="ECO:0000250" key="1">
    <source>
        <dbReference type="UniProtKB" id="I6L8L6"/>
    </source>
</evidence>
<evidence type="ECO:0000250" key="2">
    <source>
        <dbReference type="UniProtKB" id="P24605"/>
    </source>
</evidence>
<evidence type="ECO:0000269" key="3">
    <source>
    </source>
</evidence>
<evidence type="ECO:0000269" key="4">
    <source>
    </source>
</evidence>
<evidence type="ECO:0000269" key="5">
    <source>
    </source>
</evidence>
<evidence type="ECO:0000269" key="6">
    <source>
    </source>
</evidence>
<evidence type="ECO:0000269" key="7">
    <source>
    </source>
</evidence>
<evidence type="ECO:0000269" key="8">
    <source>
    </source>
</evidence>
<evidence type="ECO:0000269" key="9">
    <source>
    </source>
</evidence>
<evidence type="ECO:0000269" key="10">
    <source>
    </source>
</evidence>
<evidence type="ECO:0000269" key="11">
    <source>
    </source>
</evidence>
<evidence type="ECO:0000269" key="12">
    <source ref="11"/>
</evidence>
<evidence type="ECO:0000303" key="13">
    <source>
    </source>
</evidence>
<evidence type="ECO:0000303" key="14">
    <source>
    </source>
</evidence>
<evidence type="ECO:0000303" key="15">
    <source>
    </source>
</evidence>
<evidence type="ECO:0000303" key="16">
    <source>
    </source>
</evidence>
<evidence type="ECO:0000303" key="17">
    <source>
    </source>
</evidence>
<evidence type="ECO:0000303" key="18">
    <source>
    </source>
</evidence>
<evidence type="ECO:0000305" key="19"/>
<evidence type="ECO:0000305" key="20">
    <source>
    </source>
</evidence>
<evidence type="ECO:0000305" key="21">
    <source>
    </source>
</evidence>
<evidence type="ECO:0007744" key="22">
    <source>
        <dbReference type="PDB" id="3DIH"/>
    </source>
</evidence>
<evidence type="ECO:0007829" key="23">
    <source>
        <dbReference type="PDB" id="3DIH"/>
    </source>
</evidence>
<protein>
    <recommendedName>
        <fullName evidence="13 14 15 16 17 18">Basic phospholipase A2 homolog ammodytin L</fullName>
        <shortName evidence="14 15 16">AMDL</shortName>
        <shortName evidence="18">AtnL</shortName>
        <shortName>svPLA2 homolog</shortName>
    </recommendedName>
</protein>